<proteinExistence type="inferred from homology"/>
<name>RS4E_METM5</name>
<keyword id="KW-0687">Ribonucleoprotein</keyword>
<keyword id="KW-0689">Ribosomal protein</keyword>
<keyword id="KW-0694">RNA-binding</keyword>
<keyword id="KW-0699">rRNA-binding</keyword>
<sequence>MAIKGPRKHLKRLAAPANWQLPRKVKAFTVRPSPGPHSMDKSLPLLLVVRDVLKYADNAREAKKIIQTGKILIDGLKRKEYKHPAGLMDVLSIPEMDENYLVLFDESGRISLKKTDKADAKLCKIVNKTVIKGGHIQLNLHDGRNQIVKVSDATKAEEDVYKTGDSVLVSIPEQSIVGHVAFGEGKLAYVTGGKHVGEFAKIVEVENRALYSDIVTLENKDGEKFKTVKPYVFIVGQDEPVISM</sequence>
<dbReference type="EMBL" id="CP000609">
    <property type="protein sequence ID" value="ABO34484.1"/>
    <property type="molecule type" value="Genomic_DNA"/>
</dbReference>
<dbReference type="RefSeq" id="WP_011867943.1">
    <property type="nucleotide sequence ID" value="NC_009135.1"/>
</dbReference>
<dbReference type="SMR" id="A4FWA9"/>
<dbReference type="STRING" id="402880.MmarC5_0167"/>
<dbReference type="GeneID" id="4928455"/>
<dbReference type="KEGG" id="mmq:MmarC5_0167"/>
<dbReference type="eggNOG" id="arCOG04093">
    <property type="taxonomic scope" value="Archaea"/>
</dbReference>
<dbReference type="HOGENOM" id="CLU_060400_0_0_2"/>
<dbReference type="OrthoDB" id="372073at2157"/>
<dbReference type="Proteomes" id="UP000000253">
    <property type="component" value="Chromosome"/>
</dbReference>
<dbReference type="GO" id="GO:0022627">
    <property type="term" value="C:cytosolic small ribosomal subunit"/>
    <property type="evidence" value="ECO:0007669"/>
    <property type="project" value="TreeGrafter"/>
</dbReference>
<dbReference type="GO" id="GO:0019843">
    <property type="term" value="F:rRNA binding"/>
    <property type="evidence" value="ECO:0007669"/>
    <property type="project" value="UniProtKB-KW"/>
</dbReference>
<dbReference type="GO" id="GO:0003735">
    <property type="term" value="F:structural constituent of ribosome"/>
    <property type="evidence" value="ECO:0007669"/>
    <property type="project" value="InterPro"/>
</dbReference>
<dbReference type="GO" id="GO:0006412">
    <property type="term" value="P:translation"/>
    <property type="evidence" value="ECO:0007669"/>
    <property type="project" value="UniProtKB-UniRule"/>
</dbReference>
<dbReference type="CDD" id="cd06087">
    <property type="entry name" value="KOW_RPS4"/>
    <property type="match status" value="1"/>
</dbReference>
<dbReference type="CDD" id="cd00165">
    <property type="entry name" value="S4"/>
    <property type="match status" value="1"/>
</dbReference>
<dbReference type="FunFam" id="3.10.290.10:FF:000002">
    <property type="entry name" value="40S ribosomal protein S4"/>
    <property type="match status" value="1"/>
</dbReference>
<dbReference type="Gene3D" id="2.30.30.30">
    <property type="match status" value="1"/>
</dbReference>
<dbReference type="Gene3D" id="2.40.50.740">
    <property type="match status" value="1"/>
</dbReference>
<dbReference type="Gene3D" id="3.10.290.10">
    <property type="entry name" value="RNA-binding S4 domain"/>
    <property type="match status" value="1"/>
</dbReference>
<dbReference type="HAMAP" id="MF_00485">
    <property type="entry name" value="Ribosomal_eS4"/>
    <property type="match status" value="1"/>
</dbReference>
<dbReference type="InterPro" id="IPR014722">
    <property type="entry name" value="Rib_uL2_dom2"/>
</dbReference>
<dbReference type="InterPro" id="IPR000876">
    <property type="entry name" value="Ribosomal_eS4"/>
</dbReference>
<dbReference type="InterPro" id="IPR013845">
    <property type="entry name" value="Ribosomal_eS4_central_region"/>
</dbReference>
<dbReference type="InterPro" id="IPR038237">
    <property type="entry name" value="Ribosomal_eS4_central_sf"/>
</dbReference>
<dbReference type="InterPro" id="IPR041982">
    <property type="entry name" value="Ribosomal_eS4_KOW"/>
</dbReference>
<dbReference type="InterPro" id="IPR013843">
    <property type="entry name" value="Ribosomal_eS4_N"/>
</dbReference>
<dbReference type="InterPro" id="IPR018199">
    <property type="entry name" value="Ribosomal_eS4_N_CS"/>
</dbReference>
<dbReference type="InterPro" id="IPR036986">
    <property type="entry name" value="S4_RNA-bd_sf"/>
</dbReference>
<dbReference type="NCBIfam" id="NF003312">
    <property type="entry name" value="PRK04313.1"/>
    <property type="match status" value="1"/>
</dbReference>
<dbReference type="PANTHER" id="PTHR11581">
    <property type="entry name" value="30S/40S RIBOSOMAL PROTEIN S4"/>
    <property type="match status" value="1"/>
</dbReference>
<dbReference type="PANTHER" id="PTHR11581:SF0">
    <property type="entry name" value="SMALL RIBOSOMAL SUBUNIT PROTEIN ES4"/>
    <property type="match status" value="1"/>
</dbReference>
<dbReference type="Pfam" id="PF00900">
    <property type="entry name" value="Ribosomal_S4e"/>
    <property type="match status" value="1"/>
</dbReference>
<dbReference type="Pfam" id="PF08071">
    <property type="entry name" value="RS4NT"/>
    <property type="match status" value="1"/>
</dbReference>
<dbReference type="PIRSF" id="PIRSF002116">
    <property type="entry name" value="Ribosomal_S4"/>
    <property type="match status" value="1"/>
</dbReference>
<dbReference type="PROSITE" id="PS00528">
    <property type="entry name" value="RIBOSOMAL_S4E"/>
    <property type="match status" value="1"/>
</dbReference>
<dbReference type="PROSITE" id="PS50889">
    <property type="entry name" value="S4"/>
    <property type="match status" value="1"/>
</dbReference>
<protein>
    <recommendedName>
        <fullName evidence="1">Small ribosomal subunit protein eS4</fullName>
    </recommendedName>
    <alternativeName>
        <fullName evidence="2">30S ribosomal protein S4e</fullName>
    </alternativeName>
</protein>
<accession>A4FWA9</accession>
<reference key="1">
    <citation type="submission" date="2007-03" db="EMBL/GenBank/DDBJ databases">
        <title>Complete sequence of chromosome of Methanococcus maripaludis C5.</title>
        <authorList>
            <consortium name="US DOE Joint Genome Institute"/>
            <person name="Copeland A."/>
            <person name="Lucas S."/>
            <person name="Lapidus A."/>
            <person name="Barry K."/>
            <person name="Glavina del Rio T."/>
            <person name="Dalin E."/>
            <person name="Tice H."/>
            <person name="Pitluck S."/>
            <person name="Chertkov O."/>
            <person name="Brettin T."/>
            <person name="Bruce D."/>
            <person name="Han C."/>
            <person name="Detter J.C."/>
            <person name="Schmutz J."/>
            <person name="Larimer F."/>
            <person name="Land M."/>
            <person name="Hauser L."/>
            <person name="Kyrpides N."/>
            <person name="Mikhailova N."/>
            <person name="Sieprawska-Lupa M."/>
            <person name="Whitman W.B."/>
            <person name="Richardson P."/>
        </authorList>
    </citation>
    <scope>NUCLEOTIDE SEQUENCE [LARGE SCALE GENOMIC DNA]</scope>
    <source>
        <strain>C5 / ATCC BAA-1333</strain>
    </source>
</reference>
<feature type="chain" id="PRO_1000081339" description="Small ribosomal subunit protein eS4">
    <location>
        <begin position="1"/>
        <end position="244"/>
    </location>
</feature>
<feature type="domain" description="S4 RNA-binding" evidence="1">
    <location>
        <begin position="43"/>
        <end position="106"/>
    </location>
</feature>
<gene>
    <name evidence="1" type="primary">rps4e</name>
    <name type="ordered locus">MmarC5_0167</name>
</gene>
<evidence type="ECO:0000255" key="1">
    <source>
        <dbReference type="HAMAP-Rule" id="MF_00485"/>
    </source>
</evidence>
<evidence type="ECO:0000305" key="2"/>
<comment type="similarity">
    <text evidence="1">Belongs to the eukaryotic ribosomal protein eS4 family.</text>
</comment>
<organism>
    <name type="scientific">Methanococcus maripaludis (strain C5 / ATCC BAA-1333)</name>
    <dbReference type="NCBI Taxonomy" id="402880"/>
    <lineage>
        <taxon>Archaea</taxon>
        <taxon>Methanobacteriati</taxon>
        <taxon>Methanobacteriota</taxon>
        <taxon>Methanomada group</taxon>
        <taxon>Methanococci</taxon>
        <taxon>Methanococcales</taxon>
        <taxon>Methanococcaceae</taxon>
        <taxon>Methanococcus</taxon>
    </lineage>
</organism>